<evidence type="ECO:0000255" key="1">
    <source>
        <dbReference type="HAMAP-Rule" id="MF_00804"/>
    </source>
</evidence>
<feature type="chain" id="PRO_1000047035" description="Betaine aldehyde dehydrogenase">
    <location>
        <begin position="1"/>
        <end position="489"/>
    </location>
</feature>
<feature type="active site" description="Charge relay system" evidence="1">
    <location>
        <position position="162"/>
    </location>
</feature>
<feature type="active site" description="Proton acceptor" evidence="1">
    <location>
        <position position="251"/>
    </location>
</feature>
<feature type="active site" description="Nucleophile" evidence="1">
    <location>
        <position position="285"/>
    </location>
</feature>
<feature type="active site" description="Charge relay system" evidence="1">
    <location>
        <position position="463"/>
    </location>
</feature>
<feature type="binding site" evidence="1">
    <location>
        <position position="26"/>
    </location>
    <ligand>
        <name>K(+)</name>
        <dbReference type="ChEBI" id="CHEBI:29103"/>
        <label>1</label>
    </ligand>
</feature>
<feature type="binding site" evidence="1">
    <location>
        <position position="93"/>
    </location>
    <ligand>
        <name>K(+)</name>
        <dbReference type="ChEBI" id="CHEBI:29103"/>
        <label>1</label>
    </ligand>
</feature>
<feature type="binding site" evidence="1">
    <location>
        <begin position="150"/>
        <end position="152"/>
    </location>
    <ligand>
        <name>NAD(+)</name>
        <dbReference type="ChEBI" id="CHEBI:57540"/>
    </ligand>
</feature>
<feature type="binding site" evidence="1">
    <location>
        <begin position="176"/>
        <end position="179"/>
    </location>
    <ligand>
        <name>NAD(+)</name>
        <dbReference type="ChEBI" id="CHEBI:57540"/>
    </ligand>
</feature>
<feature type="binding site" evidence="1">
    <location>
        <position position="180"/>
    </location>
    <ligand>
        <name>K(+)</name>
        <dbReference type="ChEBI" id="CHEBI:29103"/>
        <label>1</label>
    </ligand>
</feature>
<feature type="binding site" evidence="1">
    <location>
        <begin position="229"/>
        <end position="232"/>
    </location>
    <ligand>
        <name>NAD(+)</name>
        <dbReference type="ChEBI" id="CHEBI:57540"/>
    </ligand>
</feature>
<feature type="binding site" evidence="1">
    <location>
        <position position="245"/>
    </location>
    <ligand>
        <name>K(+)</name>
        <dbReference type="ChEBI" id="CHEBI:29103"/>
        <label>2</label>
    </ligand>
</feature>
<feature type="binding site" evidence="1">
    <location>
        <position position="253"/>
    </location>
    <ligand>
        <name>NAD(+)</name>
        <dbReference type="ChEBI" id="CHEBI:57540"/>
    </ligand>
</feature>
<feature type="binding site" description="covalent" evidence="1">
    <location>
        <position position="285"/>
    </location>
    <ligand>
        <name>NAD(+)</name>
        <dbReference type="ChEBI" id="CHEBI:57540"/>
    </ligand>
</feature>
<feature type="binding site" evidence="1">
    <location>
        <position position="386"/>
    </location>
    <ligand>
        <name>NAD(+)</name>
        <dbReference type="ChEBI" id="CHEBI:57540"/>
    </ligand>
</feature>
<feature type="binding site" evidence="1">
    <location>
        <position position="456"/>
    </location>
    <ligand>
        <name>K(+)</name>
        <dbReference type="ChEBI" id="CHEBI:29103"/>
        <label>2</label>
    </ligand>
</feature>
<feature type="binding site" evidence="1">
    <location>
        <position position="459"/>
    </location>
    <ligand>
        <name>K(+)</name>
        <dbReference type="ChEBI" id="CHEBI:29103"/>
        <label>2</label>
    </ligand>
</feature>
<feature type="site" description="Seems to be a necessary countercharge to the potassium cations" evidence="1">
    <location>
        <position position="247"/>
    </location>
</feature>
<feature type="modified residue" description="Cysteine sulfenic acid (-SOH)" evidence="1">
    <location>
        <position position="285"/>
    </location>
</feature>
<comment type="function">
    <text evidence="1">Involved in the biosynthesis of the osmoprotectant glycine betaine. Catalyzes the irreversible oxidation of betaine aldehyde to the corresponding acid.</text>
</comment>
<comment type="catalytic activity">
    <reaction evidence="1">
        <text>betaine aldehyde + NAD(+) + H2O = glycine betaine + NADH + 2 H(+)</text>
        <dbReference type="Rhea" id="RHEA:15305"/>
        <dbReference type="ChEBI" id="CHEBI:15377"/>
        <dbReference type="ChEBI" id="CHEBI:15378"/>
        <dbReference type="ChEBI" id="CHEBI:15710"/>
        <dbReference type="ChEBI" id="CHEBI:17750"/>
        <dbReference type="ChEBI" id="CHEBI:57540"/>
        <dbReference type="ChEBI" id="CHEBI:57945"/>
        <dbReference type="EC" id="1.2.1.8"/>
    </reaction>
    <physiologicalReaction direction="left-to-right" evidence="1">
        <dbReference type="Rhea" id="RHEA:15306"/>
    </physiologicalReaction>
</comment>
<comment type="cofactor">
    <cofactor evidence="1">
        <name>K(+)</name>
        <dbReference type="ChEBI" id="CHEBI:29103"/>
    </cofactor>
    <text evidence="1">Binds 2 potassium ions per subunit.</text>
</comment>
<comment type="pathway">
    <text evidence="1">Amine and polyamine biosynthesis; betaine biosynthesis via choline pathway; betaine from betaine aldehyde: step 1/1.</text>
</comment>
<comment type="subunit">
    <text evidence="1">Dimer of dimers.</text>
</comment>
<comment type="similarity">
    <text evidence="1">Belongs to the aldehyde dehydrogenase family.</text>
</comment>
<name>BETB_BURM9</name>
<reference key="1">
    <citation type="journal article" date="2010" name="Genome Biol. Evol.">
        <title>Continuing evolution of Burkholderia mallei through genome reduction and large-scale rearrangements.</title>
        <authorList>
            <person name="Losada L."/>
            <person name="Ronning C.M."/>
            <person name="DeShazer D."/>
            <person name="Woods D."/>
            <person name="Fedorova N."/>
            <person name="Kim H.S."/>
            <person name="Shabalina S.A."/>
            <person name="Pearson T.R."/>
            <person name="Brinkac L."/>
            <person name="Tan P."/>
            <person name="Nandi T."/>
            <person name="Crabtree J."/>
            <person name="Badger J."/>
            <person name="Beckstrom-Sternberg S."/>
            <person name="Saqib M."/>
            <person name="Schutzer S.E."/>
            <person name="Keim P."/>
            <person name="Nierman W.C."/>
        </authorList>
    </citation>
    <scope>NUCLEOTIDE SEQUENCE [LARGE SCALE GENOMIC DNA]</scope>
    <source>
        <strain>NCTC 10229</strain>
    </source>
</reference>
<sequence>MSVYGLQRLYIAGAHADATSGKTFDTFDPATGELLARVQQASADDVDRAVASAREGQREWAAMTAMQRSRILRRAVELLRERNDALAELEMRDTGKPIAETRAVDIVTGADVIEYYAGLATAIEGLQVPLRPESFVYTRREPLGVCAGIGAWNYPIQIACWKSAPALAAGNAMIFKPSEVTPLSALKLAEIYTEAGVPAGVFNVVQGDGSVGALLSAHPGIAKVSFTGGVETGKKVMSLAGASSLKEVTMELGGKSPLIVFDDADLDRAADIAVTANFFSAGQVCTNGTRVFVQQAVKDAFVERVLARVARIRAGKPSDPDTNFGPLASAAQLDKVLGYIDSGKAEGAKLLAGGARLVNDHFASGQYVAPTVFGDCRDDMRIVREEIFGPVMSILSFETEDEAIARANATDYGLAAGVVTENLSRAHRAIHRLEAGICWINTWGESPAEMPVGGYKQSGVGRENGITTLEHYTRIKSVQVELGRYQPVF</sequence>
<accession>A2RWD6</accession>
<gene>
    <name evidence="1" type="primary">betB</name>
    <name type="ordered locus">BMA10229_0180</name>
</gene>
<keyword id="KW-0479">Metal-binding</keyword>
<keyword id="KW-0520">NAD</keyword>
<keyword id="KW-0521">NADP</keyword>
<keyword id="KW-0558">Oxidation</keyword>
<keyword id="KW-0560">Oxidoreductase</keyword>
<keyword id="KW-0630">Potassium</keyword>
<organism>
    <name type="scientific">Burkholderia mallei (strain NCTC 10229)</name>
    <dbReference type="NCBI Taxonomy" id="412022"/>
    <lineage>
        <taxon>Bacteria</taxon>
        <taxon>Pseudomonadati</taxon>
        <taxon>Pseudomonadota</taxon>
        <taxon>Betaproteobacteria</taxon>
        <taxon>Burkholderiales</taxon>
        <taxon>Burkholderiaceae</taxon>
        <taxon>Burkholderia</taxon>
        <taxon>pseudomallei group</taxon>
    </lineage>
</organism>
<proteinExistence type="inferred from homology"/>
<dbReference type="EC" id="1.2.1.8" evidence="1"/>
<dbReference type="EMBL" id="CP000545">
    <property type="protein sequence ID" value="ABN00451.1"/>
    <property type="molecule type" value="Genomic_DNA"/>
</dbReference>
<dbReference type="RefSeq" id="WP_004187839.1">
    <property type="nucleotide sequence ID" value="NC_008835.1"/>
</dbReference>
<dbReference type="SMR" id="A2RWD6"/>
<dbReference type="GeneID" id="92976421"/>
<dbReference type="KEGG" id="bml:BMA10229_0180"/>
<dbReference type="HOGENOM" id="CLU_005391_0_0_4"/>
<dbReference type="UniPathway" id="UPA00529">
    <property type="reaction ID" value="UER00386"/>
</dbReference>
<dbReference type="Proteomes" id="UP000002283">
    <property type="component" value="Chromosome II"/>
</dbReference>
<dbReference type="GO" id="GO:0008802">
    <property type="term" value="F:betaine-aldehyde dehydrogenase (NAD+) activity"/>
    <property type="evidence" value="ECO:0007669"/>
    <property type="project" value="UniProtKB-UniRule"/>
</dbReference>
<dbReference type="GO" id="GO:0046872">
    <property type="term" value="F:metal ion binding"/>
    <property type="evidence" value="ECO:0007669"/>
    <property type="project" value="UniProtKB-KW"/>
</dbReference>
<dbReference type="GO" id="GO:0019285">
    <property type="term" value="P:glycine betaine biosynthetic process from choline"/>
    <property type="evidence" value="ECO:0007669"/>
    <property type="project" value="UniProtKB-UniRule"/>
</dbReference>
<dbReference type="CDD" id="cd07090">
    <property type="entry name" value="ALDH_F9_TMBADH"/>
    <property type="match status" value="1"/>
</dbReference>
<dbReference type="FunFam" id="3.40.309.10:FF:000014">
    <property type="entry name" value="NAD/NADP-dependent betaine aldehyde dehydrogenase"/>
    <property type="match status" value="1"/>
</dbReference>
<dbReference type="FunFam" id="3.40.605.10:FF:000007">
    <property type="entry name" value="NAD/NADP-dependent betaine aldehyde dehydrogenase"/>
    <property type="match status" value="1"/>
</dbReference>
<dbReference type="Gene3D" id="3.40.605.10">
    <property type="entry name" value="Aldehyde Dehydrogenase, Chain A, domain 1"/>
    <property type="match status" value="1"/>
</dbReference>
<dbReference type="Gene3D" id="3.40.309.10">
    <property type="entry name" value="Aldehyde Dehydrogenase, Chain A, domain 2"/>
    <property type="match status" value="1"/>
</dbReference>
<dbReference type="HAMAP" id="MF_00804">
    <property type="entry name" value="BADH"/>
    <property type="match status" value="1"/>
</dbReference>
<dbReference type="InterPro" id="IPR016161">
    <property type="entry name" value="Ald_DH/histidinol_DH"/>
</dbReference>
<dbReference type="InterPro" id="IPR016163">
    <property type="entry name" value="Ald_DH_C"/>
</dbReference>
<dbReference type="InterPro" id="IPR016160">
    <property type="entry name" value="Ald_DH_CS_CYS"/>
</dbReference>
<dbReference type="InterPro" id="IPR029510">
    <property type="entry name" value="Ald_DH_CS_GLU"/>
</dbReference>
<dbReference type="InterPro" id="IPR016162">
    <property type="entry name" value="Ald_DH_N"/>
</dbReference>
<dbReference type="InterPro" id="IPR015590">
    <property type="entry name" value="Aldehyde_DH_dom"/>
</dbReference>
<dbReference type="InterPro" id="IPR011264">
    <property type="entry name" value="BADH"/>
</dbReference>
<dbReference type="NCBIfam" id="TIGR01804">
    <property type="entry name" value="BADH"/>
    <property type="match status" value="1"/>
</dbReference>
<dbReference type="NCBIfam" id="NF009725">
    <property type="entry name" value="PRK13252.1"/>
    <property type="match status" value="1"/>
</dbReference>
<dbReference type="PANTHER" id="PTHR11699">
    <property type="entry name" value="ALDEHYDE DEHYDROGENASE-RELATED"/>
    <property type="match status" value="1"/>
</dbReference>
<dbReference type="Pfam" id="PF00171">
    <property type="entry name" value="Aldedh"/>
    <property type="match status" value="1"/>
</dbReference>
<dbReference type="SUPFAM" id="SSF53720">
    <property type="entry name" value="ALDH-like"/>
    <property type="match status" value="1"/>
</dbReference>
<dbReference type="PROSITE" id="PS00070">
    <property type="entry name" value="ALDEHYDE_DEHYDR_CYS"/>
    <property type="match status" value="1"/>
</dbReference>
<dbReference type="PROSITE" id="PS00687">
    <property type="entry name" value="ALDEHYDE_DEHYDR_GLU"/>
    <property type="match status" value="1"/>
</dbReference>
<protein>
    <recommendedName>
        <fullName evidence="1">Betaine aldehyde dehydrogenase</fullName>
        <shortName evidence="1">BADH</shortName>
        <ecNumber evidence="1">1.2.1.8</ecNumber>
    </recommendedName>
</protein>